<proteinExistence type="evidence at transcript level"/>
<name>FAKD2_RAT</name>
<evidence type="ECO:0000250" key="1">
    <source>
        <dbReference type="UniProtKB" id="Q9NYY8"/>
    </source>
</evidence>
<evidence type="ECO:0000255" key="2">
    <source>
        <dbReference type="PROSITE-ProRule" id="PRU00619"/>
    </source>
</evidence>
<evidence type="ECO:0000305" key="3"/>
<dbReference type="EMBL" id="BC088416">
    <property type="protein sequence ID" value="AAH88416.1"/>
    <property type="molecule type" value="mRNA"/>
</dbReference>
<dbReference type="RefSeq" id="NP_001009673.1">
    <property type="nucleotide sequence ID" value="NM_001009673.1"/>
</dbReference>
<dbReference type="SMR" id="Q5M7V7"/>
<dbReference type="FunCoup" id="Q5M7V7">
    <property type="interactions" value="1826"/>
</dbReference>
<dbReference type="STRING" id="10116.ENSRNOP00000017281"/>
<dbReference type="PhosphoSitePlus" id="Q5M7V7"/>
<dbReference type="PaxDb" id="10116-ENSRNOP00000017281"/>
<dbReference type="PeptideAtlas" id="Q5M7V7"/>
<dbReference type="GeneID" id="301463"/>
<dbReference type="AGR" id="RGD:1307883"/>
<dbReference type="CTD" id="22868"/>
<dbReference type="RGD" id="1307883">
    <property type="gene designation" value="Fastkd2"/>
</dbReference>
<dbReference type="eggNOG" id="ENOG502QVSD">
    <property type="taxonomic scope" value="Eukaryota"/>
</dbReference>
<dbReference type="HOGENOM" id="CLU_025270_0_0_1"/>
<dbReference type="InParanoid" id="Q5M7V7"/>
<dbReference type="PhylomeDB" id="Q5M7V7"/>
<dbReference type="PRO" id="PR:Q5M7V7"/>
<dbReference type="Proteomes" id="UP000002494">
    <property type="component" value="Unplaced"/>
</dbReference>
<dbReference type="GO" id="GO:0005759">
    <property type="term" value="C:mitochondrial matrix"/>
    <property type="evidence" value="ECO:0000266"/>
    <property type="project" value="RGD"/>
</dbReference>
<dbReference type="GO" id="GO:0042645">
    <property type="term" value="C:mitochondrial nucleoid"/>
    <property type="evidence" value="ECO:0000250"/>
    <property type="project" value="UniProtKB"/>
</dbReference>
<dbReference type="GO" id="GO:0005739">
    <property type="term" value="C:mitochondrion"/>
    <property type="evidence" value="ECO:0000250"/>
    <property type="project" value="UniProtKB"/>
</dbReference>
<dbReference type="GO" id="GO:0035770">
    <property type="term" value="C:ribonucleoprotein granule"/>
    <property type="evidence" value="ECO:0000250"/>
    <property type="project" value="UniProtKB"/>
</dbReference>
<dbReference type="GO" id="GO:0003723">
    <property type="term" value="F:RNA binding"/>
    <property type="evidence" value="ECO:0000318"/>
    <property type="project" value="GO_Central"/>
</dbReference>
<dbReference type="GO" id="GO:0019843">
    <property type="term" value="F:rRNA binding"/>
    <property type="evidence" value="ECO:0000250"/>
    <property type="project" value="UniProtKB"/>
</dbReference>
<dbReference type="GO" id="GO:0006915">
    <property type="term" value="P:apoptotic process"/>
    <property type="evidence" value="ECO:0000250"/>
    <property type="project" value="UniProtKB"/>
</dbReference>
<dbReference type="GO" id="GO:1902775">
    <property type="term" value="P:mitochondrial large ribosomal subunit assembly"/>
    <property type="evidence" value="ECO:0000250"/>
    <property type="project" value="UniProtKB"/>
</dbReference>
<dbReference type="GO" id="GO:0000963">
    <property type="term" value="P:mitochondrial RNA processing"/>
    <property type="evidence" value="ECO:0000318"/>
    <property type="project" value="GO_Central"/>
</dbReference>
<dbReference type="GO" id="GO:0032543">
    <property type="term" value="P:mitochondrial translation"/>
    <property type="evidence" value="ECO:0000250"/>
    <property type="project" value="UniProtKB"/>
</dbReference>
<dbReference type="GO" id="GO:0070131">
    <property type="term" value="P:positive regulation of mitochondrial translation"/>
    <property type="evidence" value="ECO:0000250"/>
    <property type="project" value="UniProtKB"/>
</dbReference>
<dbReference type="GO" id="GO:0044528">
    <property type="term" value="P:regulation of mitochondrial mRNA stability"/>
    <property type="evidence" value="ECO:0000318"/>
    <property type="project" value="GO_Central"/>
</dbReference>
<dbReference type="GO" id="GO:0006396">
    <property type="term" value="P:RNA processing"/>
    <property type="evidence" value="ECO:0000250"/>
    <property type="project" value="UniProtKB"/>
</dbReference>
<dbReference type="InterPro" id="IPR050870">
    <property type="entry name" value="FAST_kinase"/>
</dbReference>
<dbReference type="InterPro" id="IPR010622">
    <property type="entry name" value="FAST_Leu-rich"/>
</dbReference>
<dbReference type="InterPro" id="IPR013584">
    <property type="entry name" value="RAP"/>
</dbReference>
<dbReference type="PANTHER" id="PTHR21228:SF1">
    <property type="entry name" value="FAST KINASE DOMAIN-CONTAINING PROTEIN 2, MITOCHONDRIAL"/>
    <property type="match status" value="1"/>
</dbReference>
<dbReference type="PANTHER" id="PTHR21228">
    <property type="entry name" value="FAST LEU-RICH DOMAIN-CONTAINING"/>
    <property type="match status" value="1"/>
</dbReference>
<dbReference type="Pfam" id="PF06743">
    <property type="entry name" value="FAST_1"/>
    <property type="match status" value="1"/>
</dbReference>
<dbReference type="Pfam" id="PF08373">
    <property type="entry name" value="RAP"/>
    <property type="match status" value="1"/>
</dbReference>
<dbReference type="SMART" id="SM00952">
    <property type="entry name" value="RAP"/>
    <property type="match status" value="1"/>
</dbReference>
<dbReference type="PROSITE" id="PS51286">
    <property type="entry name" value="RAP"/>
    <property type="match status" value="1"/>
</dbReference>
<organism>
    <name type="scientific">Rattus norvegicus</name>
    <name type="common">Rat</name>
    <dbReference type="NCBI Taxonomy" id="10116"/>
    <lineage>
        <taxon>Eukaryota</taxon>
        <taxon>Metazoa</taxon>
        <taxon>Chordata</taxon>
        <taxon>Craniata</taxon>
        <taxon>Vertebrata</taxon>
        <taxon>Euteleostomi</taxon>
        <taxon>Mammalia</taxon>
        <taxon>Eutheria</taxon>
        <taxon>Euarchontoglires</taxon>
        <taxon>Glires</taxon>
        <taxon>Rodentia</taxon>
        <taxon>Myomorpha</taxon>
        <taxon>Muroidea</taxon>
        <taxon>Muridae</taxon>
        <taxon>Murinae</taxon>
        <taxon>Rattus</taxon>
    </lineage>
</organism>
<gene>
    <name type="primary">Fastkd2</name>
</gene>
<feature type="transit peptide" description="Mitochondrion" evidence="3">
    <location>
        <begin position="1"/>
        <end status="unknown"/>
    </location>
</feature>
<feature type="chain" id="PRO_0000050786" description="FAST kinase domain-containing protein 2, mitochondrial">
    <location>
        <begin status="unknown"/>
        <end position="679"/>
    </location>
</feature>
<feature type="domain" description="RAP" evidence="2">
    <location>
        <begin position="607"/>
        <end position="664"/>
    </location>
</feature>
<feature type="modified residue" description="Phosphoserine" evidence="1">
    <location>
        <position position="113"/>
    </location>
</feature>
<feature type="modified residue" description="Phosphoserine" evidence="1">
    <location>
        <position position="126"/>
    </location>
</feature>
<protein>
    <recommendedName>
        <fullName>FAST kinase domain-containing protein 2, mitochondrial</fullName>
    </recommendedName>
</protein>
<reference key="1">
    <citation type="journal article" date="2004" name="Genome Res.">
        <title>The status, quality, and expansion of the NIH full-length cDNA project: the Mammalian Gene Collection (MGC).</title>
        <authorList>
            <consortium name="The MGC Project Team"/>
        </authorList>
    </citation>
    <scope>NUCLEOTIDE SEQUENCE [LARGE SCALE MRNA]</scope>
    <source>
        <tissue>Testis</tissue>
    </source>
</reference>
<keyword id="KW-0496">Mitochondrion</keyword>
<keyword id="KW-1135">Mitochondrion nucleoid</keyword>
<keyword id="KW-0597">Phosphoprotein</keyword>
<keyword id="KW-1185">Reference proteome</keyword>
<keyword id="KW-0690">Ribosome biogenesis</keyword>
<keyword id="KW-0694">RNA-binding</keyword>
<keyword id="KW-0699">rRNA-binding</keyword>
<keyword id="KW-0809">Transit peptide</keyword>
<comment type="function">
    <text evidence="1">Plays an important role in assembly of the mitochondrial large ribosomal subunit. As a component of a functional protein-RNA module, consisting of RCC1L, NGRN, RPUSD3, RPUSD4, TRUB2, FASTKD2 and 16S mitochondrial ribosomal RNA (16S mt-rRNA), controls 16S mt-rRNA abundance and is required for intra-mitochondrial translation. May play a role in mitochondrial apoptosis.</text>
</comment>
<comment type="subunit">
    <text evidence="1">Monomer. Found in a complex with GRSF1, DDX28, DHX30 and FASTKD5. Associates with the 16S mitochondrial rRNA (16S mt-rRNA). Forms a regulatory protein-RNA complex, consisting of RCC1L, NGRN, RPUSD3, RPUSD4, TRUB2, FASTKD2 and 16S mt-rRNA.</text>
</comment>
<comment type="subcellular location">
    <subcellularLocation>
        <location evidence="1">Mitochondrion matrix</location>
    </subcellularLocation>
    <subcellularLocation>
        <location evidence="1">Mitochondrion matrix</location>
        <location evidence="1">Mitochondrion nucleoid</location>
    </subcellularLocation>
    <text evidence="1">Localizes to mitochondrial RNA granules found in close proximity to the mitochondrial nucleoids.</text>
</comment>
<comment type="similarity">
    <text evidence="3">Belongs to the FAST kinase family.</text>
</comment>
<sequence>MNNRAHTFLWGIRQFRTSIPRSRALRTYSLVFCKPEVIHSKRNPRNHLLNGFDEGLQPSVRYLFQDIFISKSVAGCTQTRGIIHAAGFKLDRILCPRRLSFDAKHSFVSDGTSDHDLMKTNFHHTSTEDVLTKKMRPTPVNYKKLAQECNSLSDVLDTFSKAPTFPGSNYFLAMWIIAKRISEDKRRFEKQLMFSHPAFNQLCEQMMREAKIMRYDHLLFSLNAIVKLGVPQNSLMVQTLLRTIQERISECDERCLSILSTALVTMEPCMNVNALRAGLRILVDQQVWNINDIFTLQTVMRCIGKDMKALKELGRFSVLNSRHMFEVLAAMDHRSVVLLNECSKIVIDNIHGCPFKVLISILQSCRDLRYQNEDLFKSIADYVATTFDIWKLKHVIFFLLSFETLGFRPPGLMDKLLEKVVQEPGSLTVKNIVSVLHVYSSLNHVHNVQNREFLEALASALTGCLHQISSESLLNAVHSFCMMNYFPLAPINQLIKENIIHELLTSGDTEKNIHKLHVLNTCLKLDESTYKCIHIPLPQLPLTASHPNEKLAEVLSRLLEGDGCFSRNVQLPHNYHIDFEIRMDTNRTQVFSFSEGDASSATNMQRVAVLCVPKSAYCLNSNHLRGLMAMKIRHLNVMGFHVILIHNWELKKLKMEDAVTFVRKKIYSDEALATTDESV</sequence>
<accession>Q5M7V7</accession>